<name>RF2_MYCSS</name>
<proteinExistence type="inferred from homology"/>
<keyword id="KW-0963">Cytoplasm</keyword>
<keyword id="KW-0488">Methylation</keyword>
<keyword id="KW-0648">Protein biosynthesis</keyword>
<feature type="chain" id="PRO_1000005002" description="Peptide chain release factor 2">
    <location>
        <begin position="1"/>
        <end position="371"/>
    </location>
</feature>
<feature type="modified residue" description="N5-methylglutamine" evidence="1">
    <location>
        <position position="253"/>
    </location>
</feature>
<sequence>MDPDRQADIAALAATLTTVERVLDVDGLRDRIQKLEQEASDPNLWDDQSRAQKVTSELSHAQNELRRVEELRQRVEDLPVLYEMAAEEEGQDAENAGAEADAELAKLRVDIEAMEVRTLLSGEYDEREAVVTIRSGAGGVDAADWAEMLMRMYIRWAEQHDYPVEVFDTSYAEEAGIKSATFAVHAPYAYGTLSVEQGTHRLVRISPFDNQSRRQTSFADVEVLPVVETTDHIDVPETDLRVDVYRSSGPGGQSVNTTDSAVRLTHIPTGIVVTCQNEKSQLQNKVAAMRVLQAKLLARKKQEERAELDALKGDGGSSWGNQMRSYVLHPYQMVKDLRTEYEVGNPSAVLDGDIDGFLEAGIRWRNRRDDD</sequence>
<comment type="function">
    <text evidence="1">Peptide chain release factor 2 directs the termination of translation in response to the peptide chain termination codons UGA and UAA.</text>
</comment>
<comment type="subcellular location">
    <subcellularLocation>
        <location evidence="1">Cytoplasm</location>
    </subcellularLocation>
</comment>
<comment type="PTM">
    <text evidence="1">Methylated by PrmC. Methylation increases the termination efficiency of RF2.</text>
</comment>
<comment type="similarity">
    <text evidence="1">Belongs to the prokaryotic/mitochondrial release factor family.</text>
</comment>
<organism>
    <name type="scientific">Mycobacterium sp. (strain MCS)</name>
    <dbReference type="NCBI Taxonomy" id="164756"/>
    <lineage>
        <taxon>Bacteria</taxon>
        <taxon>Bacillati</taxon>
        <taxon>Actinomycetota</taxon>
        <taxon>Actinomycetes</taxon>
        <taxon>Mycobacteriales</taxon>
        <taxon>Mycobacteriaceae</taxon>
        <taxon>Mycobacterium</taxon>
    </lineage>
</organism>
<protein>
    <recommendedName>
        <fullName evidence="1">Peptide chain release factor 2</fullName>
        <shortName evidence="1">RF-2</shortName>
    </recommendedName>
</protein>
<gene>
    <name evidence="1" type="primary">prfB</name>
    <name type="ordered locus">Mmcs_1608</name>
</gene>
<evidence type="ECO:0000255" key="1">
    <source>
        <dbReference type="HAMAP-Rule" id="MF_00094"/>
    </source>
</evidence>
<accession>Q1BBL5</accession>
<dbReference type="EMBL" id="CP000384">
    <property type="protein sequence ID" value="ABG07719.1"/>
    <property type="molecule type" value="Genomic_DNA"/>
</dbReference>
<dbReference type="SMR" id="Q1BBL5"/>
<dbReference type="KEGG" id="mmc:Mmcs_1608"/>
<dbReference type="HOGENOM" id="CLU_036856_6_0_11"/>
<dbReference type="BioCyc" id="MSP164756:G1G6O-1646-MONOMER"/>
<dbReference type="GO" id="GO:0005737">
    <property type="term" value="C:cytoplasm"/>
    <property type="evidence" value="ECO:0007669"/>
    <property type="project" value="UniProtKB-SubCell"/>
</dbReference>
<dbReference type="GO" id="GO:0016149">
    <property type="term" value="F:translation release factor activity, codon specific"/>
    <property type="evidence" value="ECO:0007669"/>
    <property type="project" value="UniProtKB-UniRule"/>
</dbReference>
<dbReference type="FunFam" id="3.30.160.20:FF:000010">
    <property type="entry name" value="Peptide chain release factor 2"/>
    <property type="match status" value="1"/>
</dbReference>
<dbReference type="Gene3D" id="3.30.160.20">
    <property type="match status" value="1"/>
</dbReference>
<dbReference type="Gene3D" id="3.30.70.1660">
    <property type="match status" value="1"/>
</dbReference>
<dbReference type="Gene3D" id="1.20.58.410">
    <property type="entry name" value="Release factor"/>
    <property type="match status" value="1"/>
</dbReference>
<dbReference type="HAMAP" id="MF_00094">
    <property type="entry name" value="Rel_fac_2"/>
    <property type="match status" value="1"/>
</dbReference>
<dbReference type="InterPro" id="IPR005139">
    <property type="entry name" value="PCRF"/>
</dbReference>
<dbReference type="InterPro" id="IPR000352">
    <property type="entry name" value="Pep_chain_release_fac_I"/>
</dbReference>
<dbReference type="InterPro" id="IPR045853">
    <property type="entry name" value="Pep_chain_release_fac_I_sf"/>
</dbReference>
<dbReference type="InterPro" id="IPR004374">
    <property type="entry name" value="PrfB"/>
</dbReference>
<dbReference type="NCBIfam" id="TIGR00020">
    <property type="entry name" value="prfB"/>
    <property type="match status" value="1"/>
</dbReference>
<dbReference type="PANTHER" id="PTHR43116:SF3">
    <property type="entry name" value="CLASS I PEPTIDE CHAIN RELEASE FACTOR"/>
    <property type="match status" value="1"/>
</dbReference>
<dbReference type="PANTHER" id="PTHR43116">
    <property type="entry name" value="PEPTIDE CHAIN RELEASE FACTOR 2"/>
    <property type="match status" value="1"/>
</dbReference>
<dbReference type="Pfam" id="PF03462">
    <property type="entry name" value="PCRF"/>
    <property type="match status" value="1"/>
</dbReference>
<dbReference type="Pfam" id="PF00472">
    <property type="entry name" value="RF-1"/>
    <property type="match status" value="1"/>
</dbReference>
<dbReference type="SMART" id="SM00937">
    <property type="entry name" value="PCRF"/>
    <property type="match status" value="1"/>
</dbReference>
<dbReference type="SUPFAM" id="SSF75620">
    <property type="entry name" value="Release factor"/>
    <property type="match status" value="1"/>
</dbReference>
<dbReference type="PROSITE" id="PS00745">
    <property type="entry name" value="RF_PROK_I"/>
    <property type="match status" value="1"/>
</dbReference>
<reference key="1">
    <citation type="submission" date="2006-06" db="EMBL/GenBank/DDBJ databases">
        <title>Complete sequence of chromosome of Mycobacterium sp. MCS.</title>
        <authorList>
            <consortium name="US DOE Joint Genome Institute"/>
            <person name="Copeland A."/>
            <person name="Lucas S."/>
            <person name="Lapidus A."/>
            <person name="Barry K."/>
            <person name="Detter J.C."/>
            <person name="Glavina del Rio T."/>
            <person name="Hammon N."/>
            <person name="Israni S."/>
            <person name="Dalin E."/>
            <person name="Tice H."/>
            <person name="Pitluck S."/>
            <person name="Martinez M."/>
            <person name="Schmutz J."/>
            <person name="Larimer F."/>
            <person name="Land M."/>
            <person name="Hauser L."/>
            <person name="Kyrpides N."/>
            <person name="Kim E."/>
            <person name="Miller C.D."/>
            <person name="Hughes J.E."/>
            <person name="Anderson A.J."/>
            <person name="Sims R.C."/>
            <person name="Richardson P."/>
        </authorList>
    </citation>
    <scope>NUCLEOTIDE SEQUENCE [LARGE SCALE GENOMIC DNA]</scope>
    <source>
        <strain>MCS</strain>
    </source>
</reference>